<gene>
    <name type="primary">Tuba1a</name>
    <name type="synonym">Tuba1</name>
</gene>
<comment type="function">
    <text evidence="1">Tubulin is the major constituent of microtubules, protein filaments consisting of alpha- and beta-tubulin heterodimers (By similarity). Microtubules grow by the addition of GTP-tubulin dimers to the microtubule end, where a stabilizing cap forms (By similarity). Below the cap, tubulin dimers are in GDP-bound state, owing to GTPase activity of alpha-tubulin (By similarity).</text>
</comment>
<comment type="catalytic activity">
    <reaction evidence="1">
        <text>GTP + H2O = GDP + phosphate + H(+)</text>
        <dbReference type="Rhea" id="RHEA:19669"/>
        <dbReference type="ChEBI" id="CHEBI:15377"/>
        <dbReference type="ChEBI" id="CHEBI:15378"/>
        <dbReference type="ChEBI" id="CHEBI:37565"/>
        <dbReference type="ChEBI" id="CHEBI:43474"/>
        <dbReference type="ChEBI" id="CHEBI:58189"/>
    </reaction>
    <physiologicalReaction direction="left-to-right" evidence="1">
        <dbReference type="Rhea" id="RHEA:19670"/>
    </physiologicalReaction>
</comment>
<comment type="cofactor">
    <cofactor evidence="1">
        <name>Mg(2+)</name>
        <dbReference type="ChEBI" id="CHEBI:18420"/>
    </cofactor>
</comment>
<comment type="subunit">
    <text evidence="1 16">Heterodimer of alpha- and beta-tubulin (By similarity). A typical microtubule is a hollow water-filled tube with an outer diameter of 25 nm and an inner diameter of 15 nM (By similarity). Alpha-beta heterodimers associate head-to-tail to form protofilaments running lengthwise along the microtubule wall with the beta-tubulin subunit facing the microtubule plus end conferring a structural polarity (By similarity). Microtubules usually have 13 protofilaments but different protofilament numbers can be found in some organisms and specialized cells (By similarity). Interacts with gamma-tubulin; the interaction allows microtubules to nucleate from the gamma-tubulin ring complex (gTuRC) (By similarity). Nascent microtubule interacts (via alpha-tubulin MREC motif) with TTC5/STRAP; this interaction may result in tubulin mRNA-targeted degradation (By similarity). Component of sperm flagellar doublet microtubules (PubMed:37865089).</text>
</comment>
<comment type="interaction">
    <interactant intactId="EBI-400542">
        <id>P68369</id>
    </interactant>
    <interactant intactId="EBI-943859">
        <id>Q80TQ2</id>
        <label>Cyld</label>
    </interactant>
    <organismsDiffer>false</organismsDiffer>
    <experiments>5</experiments>
</comment>
<comment type="subcellular location">
    <subcellularLocation>
        <location>Cytoplasm</location>
        <location>Cytoskeleton</location>
    </subcellularLocation>
    <subcellularLocation>
        <location evidence="16">Cytoplasm</location>
        <location evidence="16">Cytoskeleton</location>
        <location evidence="16">Flagellum axoneme</location>
    </subcellularLocation>
</comment>
<comment type="tissue specificity">
    <text evidence="15">Ubiquitously expressed, although primarily in lung and brain.</text>
</comment>
<comment type="PTM">
    <text evidence="7 10 14">Some glutamate residues at the C-terminus are polyglycylated, resulting in polyglycine chains on the gamma-carboxyl group. Glycylation is mainly limited to tubulin incorporated into axonemes (cilia and flagella) whereas glutamylation is prevalent in neuronal cells, centrioles, axonemes, and the mitotic spindle. Both modifications can coexist on the same protein on adjacent residues, and lowering polyglycylation levels increases polyglutamylation, and reciprocally. Cilia and flagella glycylation is required for their stability and maintenance. Flagella glycylation controls sperm motility (PubMed:33414192).</text>
</comment>
<comment type="PTM">
    <text evidence="3 5 9 10">Some glutamate residues at the C-terminus are polyglutamylated, resulting in polyglutamate chains on the gamma-carboxyl group (PubMed:15890843, PubMed:1967194). Polyglutamylation plays a key role in microtubule severing by spastin (SPAST). SPAST preferentially recognizes and acts on microtubules decorated with short polyglutamate tails: severing activity by SPAST increases as the number of glutamates per tubulin rises from one to eight, but decreases beyond this glutamylation threshold (By similarity). Glutamylation is also involved in cilia motility (PubMed:23897886).</text>
</comment>
<comment type="PTM">
    <text evidence="3">Acetylation of alpha chains at Lys-40 is located inside the microtubule lumen. This modification has been correlated with increased microtubule stability, intracellular transport and ciliary assembly.</text>
</comment>
<comment type="PTM">
    <text evidence="1">Methylation of alpha chains at Lys-40 is found in mitotic microtubules and is required for normal mitosis and cytokinesis contributing to genomic stability.</text>
</comment>
<comment type="PTM">
    <text evidence="3">Nitration of Tyr-451 is irreversible and interferes with normal dynein intracellular distribution.</text>
</comment>
<comment type="PTM">
    <text evidence="6 8 11 12 13">Undergoes a tyrosination/detyrosination cycle, the cyclic removal and re-addition of a C-terminal tyrosine residue by the enzymes tubulin tyrosine carboxypeptidase (MATCAP1, VASH1 or VASH2) and tubulin tyrosine ligase (TTL), respectively.</text>
</comment>
<comment type="PTM">
    <molecule>Tubulin alpha-1A chain</molecule>
    <text evidence="3 6 8">Tyrosination promotes microtubule interaction with CAP-Gly domain-containing proteins such as CLIP1, CLIP2 and DCTN1 (PubMed:16954346, PubMed:19564401). Tyrosination regulates the initiation of dynein-dynactin motility via interaction with DCTN1, which brings the dynein-dynactin complex into contact with microtubules. In neurons, tyrosinated tubulins mediate the initiation of retrograde vesicle transport (By similarity).</text>
</comment>
<comment type="PTM">
    <molecule>Detyrosinated tubulin alpha-1A chain</molecule>
    <text evidence="3 11 12">Detyrosination is involved in metaphase plate congression by guiding chromosomes during mitosis: detyrosination promotes interaction with CENPE, promoting pole-proximal transport of chromosomes toward the equator (By similarity). Detyrosination increases microtubules-dependent mechanotransduction in dystrophic cardiac and skeletal muscle (PubMed:26446751). In cardiomyocytes, detyrosinated microtubules are required to resist to contractile compression during contraction: detyrosination promotes association with desmin (DES) at force-generating sarcomeres, leading to buckled microtubules and mechanical resistance to contraction (PubMed:27102488).</text>
</comment>
<comment type="similarity">
    <text evidence="17">Belongs to the tubulin family.</text>
</comment>
<proteinExistence type="evidence at protein level"/>
<protein>
    <recommendedName>
        <fullName>Tubulin alpha-1A chain</fullName>
        <ecNumber evidence="1">3.6.5.-</ecNumber>
    </recommendedName>
    <alternativeName>
        <fullName>Alpha-tubulin 1</fullName>
    </alternativeName>
    <alternativeName>
        <fullName>Alpha-tubulin isotype M-alpha-1</fullName>
    </alternativeName>
    <alternativeName>
        <fullName>Tubulin alpha-1 chain</fullName>
    </alternativeName>
    <component>
        <recommendedName>
            <fullName>Detyrosinated tubulin alpha-1A chain</fullName>
        </recommendedName>
    </component>
</protein>
<dbReference type="EC" id="3.6.5.-" evidence="1"/>
<dbReference type="EMBL" id="M13445">
    <property type="protein sequence ID" value="AAA40499.1"/>
    <property type="molecule type" value="mRNA"/>
</dbReference>
<dbReference type="EMBL" id="AK077529">
    <property type="protein sequence ID" value="BAC36848.1"/>
    <property type="molecule type" value="mRNA"/>
</dbReference>
<dbReference type="EMBL" id="AK145404">
    <property type="protein sequence ID" value="BAE26417.1"/>
    <property type="molecule type" value="mRNA"/>
</dbReference>
<dbReference type="EMBL" id="AK146983">
    <property type="protein sequence ID" value="BAE27586.1"/>
    <property type="molecule type" value="mRNA"/>
</dbReference>
<dbReference type="EMBL" id="AK164335">
    <property type="protein sequence ID" value="BAE37745.1"/>
    <property type="molecule type" value="mRNA"/>
</dbReference>
<dbReference type="EMBL" id="AK167687">
    <property type="protein sequence ID" value="BAE39734.1"/>
    <property type="molecule type" value="mRNA"/>
</dbReference>
<dbReference type="EMBL" id="AK168762">
    <property type="protein sequence ID" value="BAE40598.1"/>
    <property type="molecule type" value="mRNA"/>
</dbReference>
<dbReference type="EMBL" id="AK169610">
    <property type="protein sequence ID" value="BAE41258.1"/>
    <property type="molecule type" value="mRNA"/>
</dbReference>
<dbReference type="EMBL" id="BC056169">
    <property type="protein sequence ID" value="AAH56169.1"/>
    <property type="molecule type" value="mRNA"/>
</dbReference>
<dbReference type="EMBL" id="BC083343">
    <property type="protein sequence ID" value="AAH83343.1"/>
    <property type="molecule type" value="mRNA"/>
</dbReference>
<dbReference type="EMBL" id="BC083345">
    <property type="protein sequence ID" value="AAH83345.1"/>
    <property type="molecule type" value="mRNA"/>
</dbReference>
<dbReference type="EMBL" id="BC085256">
    <property type="protein sequence ID" value="AAH85256.1"/>
    <property type="molecule type" value="mRNA"/>
</dbReference>
<dbReference type="EMBL" id="M28729">
    <property type="protein sequence ID" value="AAA40506.1"/>
    <property type="molecule type" value="mRNA"/>
</dbReference>
<dbReference type="EMBL" id="BC083344">
    <property type="protein sequence ID" value="AAH83344.1"/>
    <property type="molecule type" value="mRNA"/>
</dbReference>
<dbReference type="CCDS" id="CCDS37196.1"/>
<dbReference type="PIR" id="I77424">
    <property type="entry name" value="I77424"/>
</dbReference>
<dbReference type="RefSeq" id="NP_035783.1">
    <property type="nucleotide sequence ID" value="NM_011653.2"/>
</dbReference>
<dbReference type="PDB" id="6JZD">
    <property type="method" value="X-ray"/>
    <property type="resolution" value="2.48 A"/>
    <property type="chains" value="C=437-451"/>
</dbReference>
<dbReference type="PDB" id="8IXA">
    <property type="method" value="EM"/>
    <property type="resolution" value="4.20 A"/>
    <property type="chains" value="A/B/C/D/E/F/G/H/I=1-451"/>
</dbReference>
<dbReference type="PDB" id="8IXB">
    <property type="method" value="EM"/>
    <property type="resolution" value="4.20 A"/>
    <property type="chains" value="A/E/F/H=1-451"/>
</dbReference>
<dbReference type="PDB" id="8TO0">
    <property type="method" value="EM"/>
    <property type="resolution" value="7.70 A"/>
    <property type="chains" value="A5/A7/A9/AM/AO/AQ/AS/AU/AW/AY/Aj/Al/An/Ap/Ar/At/Av/B0/B2/B4/B8/BA/BC/BE/BO/BQ/BS/BU/BW/BY=1-451"/>
</dbReference>
<dbReference type="PDBsum" id="6JZD"/>
<dbReference type="PDBsum" id="8IXA"/>
<dbReference type="PDBsum" id="8IXB"/>
<dbReference type="PDBsum" id="8TO0"/>
<dbReference type="EMDB" id="EMD-35790"/>
<dbReference type="EMDB" id="EMD-41431"/>
<dbReference type="SMR" id="P68369"/>
<dbReference type="BioGRID" id="204372">
    <property type="interactions" value="74"/>
</dbReference>
<dbReference type="CORUM" id="P68369"/>
<dbReference type="FunCoup" id="P68369">
    <property type="interactions" value="1480"/>
</dbReference>
<dbReference type="IntAct" id="P68369">
    <property type="interactions" value="25"/>
</dbReference>
<dbReference type="MINT" id="P68369"/>
<dbReference type="STRING" id="10090.ENSMUSP00000094778"/>
<dbReference type="GlyGen" id="P68369">
    <property type="glycosylation" value="2 sites, 1 N-linked glycan (1 site), 1 O-linked glycan (1 site)"/>
</dbReference>
<dbReference type="iPTMnet" id="P68369"/>
<dbReference type="PhosphoSitePlus" id="P68369"/>
<dbReference type="SwissPalm" id="P68369"/>
<dbReference type="jPOST" id="P68369"/>
<dbReference type="PaxDb" id="10090-ENSMUSP00000094778"/>
<dbReference type="PeptideAtlas" id="P68369"/>
<dbReference type="Pumba" id="P68369"/>
<dbReference type="Antibodypedia" id="3282">
    <property type="antibodies" value="691 antibodies from 40 providers"/>
</dbReference>
<dbReference type="DNASU" id="22142"/>
<dbReference type="Ensembl" id="ENSMUST00000097014.7">
    <property type="protein sequence ID" value="ENSMUSP00000094778.6"/>
    <property type="gene ID" value="ENSMUSG00000072235.7"/>
</dbReference>
<dbReference type="GeneID" id="22142"/>
<dbReference type="KEGG" id="mmu:22142"/>
<dbReference type="UCSC" id="uc007xok.1">
    <property type="organism name" value="mouse"/>
</dbReference>
<dbReference type="AGR" id="MGI:98869"/>
<dbReference type="CTD" id="7846"/>
<dbReference type="MGI" id="MGI:98869">
    <property type="gene designation" value="Tuba1a"/>
</dbReference>
<dbReference type="VEuPathDB" id="HostDB:ENSMUSG00000072235"/>
<dbReference type="eggNOG" id="KOG1376">
    <property type="taxonomic scope" value="Eukaryota"/>
</dbReference>
<dbReference type="GeneTree" id="ENSGT00950000182825"/>
<dbReference type="HOGENOM" id="CLU_015718_0_0_1"/>
<dbReference type="InParanoid" id="P68369"/>
<dbReference type="OMA" id="FANAFCK"/>
<dbReference type="OrthoDB" id="1844at2759"/>
<dbReference type="PhylomeDB" id="P68369"/>
<dbReference type="TreeFam" id="TF300314"/>
<dbReference type="Reactome" id="R-MMU-190840">
    <property type="pathway name" value="Microtubule-dependent trafficking of connexons from Golgi to the plasma membrane"/>
</dbReference>
<dbReference type="Reactome" id="R-MMU-2132295">
    <property type="pathway name" value="MHC class II antigen presentation"/>
</dbReference>
<dbReference type="Reactome" id="R-MMU-2467813">
    <property type="pathway name" value="Separation of Sister Chromatids"/>
</dbReference>
<dbReference type="Reactome" id="R-MMU-2500257">
    <property type="pathway name" value="Resolution of Sister Chromatid Cohesion"/>
</dbReference>
<dbReference type="Reactome" id="R-MMU-2565942">
    <property type="pathway name" value="Regulation of PLK1 Activity at G2/M Transition"/>
</dbReference>
<dbReference type="Reactome" id="R-MMU-3371497">
    <property type="pathway name" value="HSP90 chaperone cycle for steroid hormone receptors (SHR) in the presence of ligand"/>
</dbReference>
<dbReference type="Reactome" id="R-MMU-380259">
    <property type="pathway name" value="Loss of Nlp from mitotic centrosomes"/>
</dbReference>
<dbReference type="Reactome" id="R-MMU-380270">
    <property type="pathway name" value="Recruitment of mitotic centrosome proteins and complexes"/>
</dbReference>
<dbReference type="Reactome" id="R-MMU-380284">
    <property type="pathway name" value="Loss of proteins required for interphase microtubule organization from the centrosome"/>
</dbReference>
<dbReference type="Reactome" id="R-MMU-380320">
    <property type="pathway name" value="Recruitment of NuMA to mitotic centrosomes"/>
</dbReference>
<dbReference type="Reactome" id="R-MMU-437239">
    <property type="pathway name" value="Recycling pathway of L1"/>
</dbReference>
<dbReference type="Reactome" id="R-MMU-5610787">
    <property type="pathway name" value="Hedgehog 'off' state"/>
</dbReference>
<dbReference type="Reactome" id="R-MMU-5617833">
    <property type="pathway name" value="Cilium Assembly"/>
</dbReference>
<dbReference type="Reactome" id="R-MMU-5620912">
    <property type="pathway name" value="Anchoring of the basal body to the plasma membrane"/>
</dbReference>
<dbReference type="Reactome" id="R-MMU-5620924">
    <property type="pathway name" value="Intraflagellar transport"/>
</dbReference>
<dbReference type="Reactome" id="R-MMU-5626467">
    <property type="pathway name" value="RHO GTPases activate IQGAPs"/>
</dbReference>
<dbReference type="Reactome" id="R-MMU-5663220">
    <property type="pathway name" value="RHO GTPases Activate Formins"/>
</dbReference>
<dbReference type="Reactome" id="R-MMU-6807878">
    <property type="pathway name" value="COPI-mediated anterograde transport"/>
</dbReference>
<dbReference type="Reactome" id="R-MMU-6811434">
    <property type="pathway name" value="COPI-dependent Golgi-to-ER retrograde traffic"/>
</dbReference>
<dbReference type="Reactome" id="R-MMU-6811436">
    <property type="pathway name" value="COPI-independent Golgi-to-ER retrograde traffic"/>
</dbReference>
<dbReference type="Reactome" id="R-MMU-68877">
    <property type="pathway name" value="Mitotic Prometaphase"/>
</dbReference>
<dbReference type="Reactome" id="R-MMU-8852276">
    <property type="pathway name" value="The role of GTSE1 in G2/M progression after G2 checkpoint"/>
</dbReference>
<dbReference type="Reactome" id="R-MMU-8854518">
    <property type="pathway name" value="AURKA Activation by TPX2"/>
</dbReference>
<dbReference type="Reactome" id="R-MMU-8955332">
    <property type="pathway name" value="Carboxyterminal post-translational modifications of tubulin"/>
</dbReference>
<dbReference type="Reactome" id="R-MMU-9646399">
    <property type="pathway name" value="Aggrephagy"/>
</dbReference>
<dbReference type="Reactome" id="R-MMU-9648025">
    <property type="pathway name" value="EML4 and NUDC in mitotic spindle formation"/>
</dbReference>
<dbReference type="Reactome" id="R-MMU-9668328">
    <property type="pathway name" value="Sealing of the nuclear envelope (NE) by ESCRT-III"/>
</dbReference>
<dbReference type="Reactome" id="R-MMU-983189">
    <property type="pathway name" value="Kinesins"/>
</dbReference>
<dbReference type="Reactome" id="R-MMU-9833482">
    <property type="pathway name" value="PKR-mediated signaling"/>
</dbReference>
<dbReference type="BioGRID-ORCS" id="22142">
    <property type="hits" value="12 hits in 59 CRISPR screens"/>
</dbReference>
<dbReference type="CD-CODE" id="CE726F99">
    <property type="entry name" value="Postsynaptic density"/>
</dbReference>
<dbReference type="ChiTaRS" id="Tuba1a">
    <property type="organism name" value="mouse"/>
</dbReference>
<dbReference type="PRO" id="PR:P68369"/>
<dbReference type="Proteomes" id="UP000000589">
    <property type="component" value="Chromosome 15"/>
</dbReference>
<dbReference type="RNAct" id="P68369">
    <property type="molecule type" value="protein"/>
</dbReference>
<dbReference type="Bgee" id="ENSMUSG00000072235">
    <property type="expression patterns" value="Expressed in trigeminal ganglion and 250 other cell types or tissues"/>
</dbReference>
<dbReference type="GO" id="GO:0005879">
    <property type="term" value="C:axonemal microtubule"/>
    <property type="evidence" value="ECO:0007669"/>
    <property type="project" value="Ensembl"/>
</dbReference>
<dbReference type="GO" id="GO:0000793">
    <property type="term" value="C:condensed chromosome"/>
    <property type="evidence" value="ECO:0000314"/>
    <property type="project" value="MGI"/>
</dbReference>
<dbReference type="GO" id="GO:0005881">
    <property type="term" value="C:cytoplasmic microtubule"/>
    <property type="evidence" value="ECO:0000314"/>
    <property type="project" value="MGI"/>
</dbReference>
<dbReference type="GO" id="GO:0036464">
    <property type="term" value="C:cytoplasmic ribonucleoprotein granule"/>
    <property type="evidence" value="ECO:0007669"/>
    <property type="project" value="Ensembl"/>
</dbReference>
<dbReference type="GO" id="GO:0005829">
    <property type="term" value="C:cytosol"/>
    <property type="evidence" value="ECO:0000314"/>
    <property type="project" value="MGI"/>
</dbReference>
<dbReference type="GO" id="GO:0043209">
    <property type="term" value="C:myelin sheath"/>
    <property type="evidence" value="ECO:0007005"/>
    <property type="project" value="UniProtKB"/>
</dbReference>
<dbReference type="GO" id="GO:0031594">
    <property type="term" value="C:neuromuscular junction"/>
    <property type="evidence" value="ECO:0000314"/>
    <property type="project" value="SynGO"/>
</dbReference>
<dbReference type="GO" id="GO:0005886">
    <property type="term" value="C:plasma membrane"/>
    <property type="evidence" value="ECO:0000314"/>
    <property type="project" value="MGI"/>
</dbReference>
<dbReference type="GO" id="GO:0055037">
    <property type="term" value="C:recycling endosome"/>
    <property type="evidence" value="ECO:0007669"/>
    <property type="project" value="Ensembl"/>
</dbReference>
<dbReference type="GO" id="GO:0036126">
    <property type="term" value="C:sperm flagellum"/>
    <property type="evidence" value="ECO:0000314"/>
    <property type="project" value="UniProtKB"/>
</dbReference>
<dbReference type="GO" id="GO:0045202">
    <property type="term" value="C:synapse"/>
    <property type="evidence" value="ECO:0000314"/>
    <property type="project" value="MGI"/>
</dbReference>
<dbReference type="GO" id="GO:0005525">
    <property type="term" value="F:GTP binding"/>
    <property type="evidence" value="ECO:0000315"/>
    <property type="project" value="MGI"/>
</dbReference>
<dbReference type="GO" id="GO:0016787">
    <property type="term" value="F:hydrolase activity"/>
    <property type="evidence" value="ECO:0007669"/>
    <property type="project" value="UniProtKB-KW"/>
</dbReference>
<dbReference type="GO" id="GO:0042802">
    <property type="term" value="F:identical protein binding"/>
    <property type="evidence" value="ECO:0007669"/>
    <property type="project" value="Ensembl"/>
</dbReference>
<dbReference type="GO" id="GO:0046872">
    <property type="term" value="F:metal ion binding"/>
    <property type="evidence" value="ECO:0007669"/>
    <property type="project" value="UniProtKB-KW"/>
</dbReference>
<dbReference type="GO" id="GO:0046982">
    <property type="term" value="F:protein heterodimerization activity"/>
    <property type="evidence" value="ECO:0000315"/>
    <property type="project" value="MGI"/>
</dbReference>
<dbReference type="GO" id="GO:0044877">
    <property type="term" value="F:protein-containing complex binding"/>
    <property type="evidence" value="ECO:0000314"/>
    <property type="project" value="MGI"/>
</dbReference>
<dbReference type="GO" id="GO:0005200">
    <property type="term" value="F:structural constituent of cytoskeleton"/>
    <property type="evidence" value="ECO:0007669"/>
    <property type="project" value="InterPro"/>
</dbReference>
<dbReference type="GO" id="GO:0030534">
    <property type="term" value="P:adult behavior"/>
    <property type="evidence" value="ECO:0000315"/>
    <property type="project" value="MGI"/>
</dbReference>
<dbReference type="GO" id="GO:0008344">
    <property type="term" value="P:adult locomotory behavior"/>
    <property type="evidence" value="ECO:0000315"/>
    <property type="project" value="MGI"/>
</dbReference>
<dbReference type="GO" id="GO:0071277">
    <property type="term" value="P:cellular response to calcium ion"/>
    <property type="evidence" value="ECO:0000314"/>
    <property type="project" value="MGI"/>
</dbReference>
<dbReference type="GO" id="GO:0007098">
    <property type="term" value="P:centrosome cycle"/>
    <property type="evidence" value="ECO:0000315"/>
    <property type="project" value="MGI"/>
</dbReference>
<dbReference type="GO" id="GO:0021696">
    <property type="term" value="P:cerebellar cortex morphogenesis"/>
    <property type="evidence" value="ECO:0000315"/>
    <property type="project" value="MGI"/>
</dbReference>
<dbReference type="GO" id="GO:0021987">
    <property type="term" value="P:cerebral cortex development"/>
    <property type="evidence" value="ECO:0000315"/>
    <property type="project" value="MGI"/>
</dbReference>
<dbReference type="GO" id="GO:0021542">
    <property type="term" value="P:dentate gyrus development"/>
    <property type="evidence" value="ECO:0000315"/>
    <property type="project" value="MGI"/>
</dbReference>
<dbReference type="GO" id="GO:0030317">
    <property type="term" value="P:flagellated sperm motility"/>
    <property type="evidence" value="ECO:0000314"/>
    <property type="project" value="UniProtKB"/>
</dbReference>
<dbReference type="GO" id="GO:0048853">
    <property type="term" value="P:forebrain morphogenesis"/>
    <property type="evidence" value="ECO:0000315"/>
    <property type="project" value="MGI"/>
</dbReference>
<dbReference type="GO" id="GO:0010467">
    <property type="term" value="P:gene expression"/>
    <property type="evidence" value="ECO:0000315"/>
    <property type="project" value="MGI"/>
</dbReference>
<dbReference type="GO" id="GO:0010001">
    <property type="term" value="P:glial cell differentiation"/>
    <property type="evidence" value="ECO:0000315"/>
    <property type="project" value="MGI"/>
</dbReference>
<dbReference type="GO" id="GO:0021766">
    <property type="term" value="P:hippocampus development"/>
    <property type="evidence" value="ECO:0000315"/>
    <property type="project" value="MGI"/>
</dbReference>
<dbReference type="GO" id="GO:0048873">
    <property type="term" value="P:homeostasis of number of cells within a tissue"/>
    <property type="evidence" value="ECO:0000315"/>
    <property type="project" value="MGI"/>
</dbReference>
<dbReference type="GO" id="GO:0006886">
    <property type="term" value="P:intracellular protein transport"/>
    <property type="evidence" value="ECO:0000315"/>
    <property type="project" value="MGI"/>
</dbReference>
<dbReference type="GO" id="GO:0007626">
    <property type="term" value="P:locomotory behavior"/>
    <property type="evidence" value="ECO:0000315"/>
    <property type="project" value="MGI"/>
</dbReference>
<dbReference type="GO" id="GO:0035641">
    <property type="term" value="P:locomotory exploration behavior"/>
    <property type="evidence" value="ECO:0000315"/>
    <property type="project" value="MGI"/>
</dbReference>
<dbReference type="GO" id="GO:0007613">
    <property type="term" value="P:memory"/>
    <property type="evidence" value="ECO:0000315"/>
    <property type="project" value="MGI"/>
</dbReference>
<dbReference type="GO" id="GO:0000226">
    <property type="term" value="P:microtubule cytoskeleton organization"/>
    <property type="evidence" value="ECO:0000315"/>
    <property type="project" value="MGI"/>
</dbReference>
<dbReference type="GO" id="GO:0046785">
    <property type="term" value="P:microtubule polymerization"/>
    <property type="evidence" value="ECO:0000315"/>
    <property type="project" value="MGI"/>
</dbReference>
<dbReference type="GO" id="GO:0061744">
    <property type="term" value="P:motor behavior"/>
    <property type="evidence" value="ECO:0000315"/>
    <property type="project" value="MGI"/>
</dbReference>
<dbReference type="GO" id="GO:0022008">
    <property type="term" value="P:neurogenesis"/>
    <property type="evidence" value="ECO:0000315"/>
    <property type="project" value="MGI"/>
</dbReference>
<dbReference type="GO" id="GO:0051402">
    <property type="term" value="P:neuron apoptotic process"/>
    <property type="evidence" value="ECO:0000315"/>
    <property type="project" value="MGI"/>
</dbReference>
<dbReference type="GO" id="GO:0030182">
    <property type="term" value="P:neuron differentiation"/>
    <property type="evidence" value="ECO:0000315"/>
    <property type="project" value="MGI"/>
</dbReference>
<dbReference type="GO" id="GO:0001764">
    <property type="term" value="P:neuron migration"/>
    <property type="evidence" value="ECO:0000315"/>
    <property type="project" value="MGI"/>
</dbReference>
<dbReference type="GO" id="GO:0140058">
    <property type="term" value="P:neuron projection arborization"/>
    <property type="evidence" value="ECO:0000315"/>
    <property type="project" value="MGI"/>
</dbReference>
<dbReference type="GO" id="GO:0072384">
    <property type="term" value="P:organelle transport along microtubule"/>
    <property type="evidence" value="ECO:0000315"/>
    <property type="project" value="MGI"/>
</dbReference>
<dbReference type="GO" id="GO:0021859">
    <property type="term" value="P:pyramidal neuron differentiation"/>
    <property type="evidence" value="ECO:0000315"/>
    <property type="project" value="MGI"/>
</dbReference>
<dbReference type="GO" id="GO:0050807">
    <property type="term" value="P:regulation of synapse organization"/>
    <property type="evidence" value="ECO:0000314"/>
    <property type="project" value="SynGO"/>
</dbReference>
<dbReference type="GO" id="GO:1902065">
    <property type="term" value="P:response to L-glutamate"/>
    <property type="evidence" value="ECO:0000314"/>
    <property type="project" value="MGI"/>
</dbReference>
<dbReference type="GO" id="GO:0009612">
    <property type="term" value="P:response to mechanical stimulus"/>
    <property type="evidence" value="ECO:0000315"/>
    <property type="project" value="MGI"/>
</dbReference>
<dbReference type="GO" id="GO:0034612">
    <property type="term" value="P:response to tumor necrosis factor"/>
    <property type="evidence" value="ECO:0000314"/>
    <property type="project" value="MGI"/>
</dbReference>
<dbReference type="GO" id="GO:0007224">
    <property type="term" value="P:smoothened signaling pathway"/>
    <property type="evidence" value="ECO:0000314"/>
    <property type="project" value="MGI"/>
</dbReference>
<dbReference type="GO" id="GO:0001964">
    <property type="term" value="P:startle response"/>
    <property type="evidence" value="ECO:0000315"/>
    <property type="project" value="MGI"/>
</dbReference>
<dbReference type="GO" id="GO:0050808">
    <property type="term" value="P:synapse organization"/>
    <property type="evidence" value="ECO:0000315"/>
    <property type="project" value="MGI"/>
</dbReference>
<dbReference type="GO" id="GO:0008542">
    <property type="term" value="P:visual learning"/>
    <property type="evidence" value="ECO:0000315"/>
    <property type="project" value="MGI"/>
</dbReference>
<dbReference type="CDD" id="cd02186">
    <property type="entry name" value="alpha_tubulin"/>
    <property type="match status" value="1"/>
</dbReference>
<dbReference type="FunFam" id="1.10.287.600:FF:000005">
    <property type="entry name" value="Tubulin alpha chain"/>
    <property type="match status" value="1"/>
</dbReference>
<dbReference type="FunFam" id="3.30.1330.20:FF:000001">
    <property type="entry name" value="Tubulin alpha chain"/>
    <property type="match status" value="1"/>
</dbReference>
<dbReference type="FunFam" id="3.40.50.1440:FF:000002">
    <property type="entry name" value="Tubulin alpha chain"/>
    <property type="match status" value="1"/>
</dbReference>
<dbReference type="Gene3D" id="1.10.287.600">
    <property type="entry name" value="Helix hairpin bin"/>
    <property type="match status" value="1"/>
</dbReference>
<dbReference type="Gene3D" id="3.30.1330.20">
    <property type="entry name" value="Tubulin/FtsZ, C-terminal domain"/>
    <property type="match status" value="1"/>
</dbReference>
<dbReference type="Gene3D" id="3.40.50.1440">
    <property type="entry name" value="Tubulin/FtsZ, GTPase domain"/>
    <property type="match status" value="1"/>
</dbReference>
<dbReference type="InterPro" id="IPR002452">
    <property type="entry name" value="Alpha_tubulin"/>
</dbReference>
<dbReference type="InterPro" id="IPR008280">
    <property type="entry name" value="Tub_FtsZ_C"/>
</dbReference>
<dbReference type="InterPro" id="IPR000217">
    <property type="entry name" value="Tubulin"/>
</dbReference>
<dbReference type="InterPro" id="IPR037103">
    <property type="entry name" value="Tubulin/FtsZ-like_C"/>
</dbReference>
<dbReference type="InterPro" id="IPR018316">
    <property type="entry name" value="Tubulin/FtsZ_2-layer-sand-dom"/>
</dbReference>
<dbReference type="InterPro" id="IPR036525">
    <property type="entry name" value="Tubulin/FtsZ_GTPase_sf"/>
</dbReference>
<dbReference type="InterPro" id="IPR023123">
    <property type="entry name" value="Tubulin_C"/>
</dbReference>
<dbReference type="InterPro" id="IPR017975">
    <property type="entry name" value="Tubulin_CS"/>
</dbReference>
<dbReference type="InterPro" id="IPR003008">
    <property type="entry name" value="Tubulin_FtsZ_GTPase"/>
</dbReference>
<dbReference type="PANTHER" id="PTHR11588">
    <property type="entry name" value="TUBULIN"/>
    <property type="match status" value="1"/>
</dbReference>
<dbReference type="Pfam" id="PF00091">
    <property type="entry name" value="Tubulin"/>
    <property type="match status" value="1"/>
</dbReference>
<dbReference type="Pfam" id="PF03953">
    <property type="entry name" value="Tubulin_C"/>
    <property type="match status" value="1"/>
</dbReference>
<dbReference type="PRINTS" id="PR01162">
    <property type="entry name" value="ALPHATUBULIN"/>
</dbReference>
<dbReference type="PRINTS" id="PR01161">
    <property type="entry name" value="TUBULIN"/>
</dbReference>
<dbReference type="SMART" id="SM00864">
    <property type="entry name" value="Tubulin"/>
    <property type="match status" value="1"/>
</dbReference>
<dbReference type="SMART" id="SM00865">
    <property type="entry name" value="Tubulin_C"/>
    <property type="match status" value="1"/>
</dbReference>
<dbReference type="SUPFAM" id="SSF55307">
    <property type="entry name" value="Tubulin C-terminal domain-like"/>
    <property type="match status" value="1"/>
</dbReference>
<dbReference type="SUPFAM" id="SSF52490">
    <property type="entry name" value="Tubulin nucleotide-binding domain-like"/>
    <property type="match status" value="1"/>
</dbReference>
<dbReference type="PROSITE" id="PS00227">
    <property type="entry name" value="TUBULIN"/>
    <property type="match status" value="1"/>
</dbReference>
<evidence type="ECO:0000250" key="1">
    <source>
        <dbReference type="UniProtKB" id="P68363"/>
    </source>
</evidence>
<evidence type="ECO:0000250" key="2">
    <source>
        <dbReference type="UniProtKB" id="P68373"/>
    </source>
</evidence>
<evidence type="ECO:0000250" key="3">
    <source>
        <dbReference type="UniProtKB" id="Q71U36"/>
    </source>
</evidence>
<evidence type="ECO:0000256" key="4">
    <source>
        <dbReference type="SAM" id="MobiDB-lite"/>
    </source>
</evidence>
<evidence type="ECO:0000269" key="5">
    <source>
    </source>
</evidence>
<evidence type="ECO:0000269" key="6">
    <source>
    </source>
</evidence>
<evidence type="ECO:0000269" key="7">
    <source>
    </source>
</evidence>
<evidence type="ECO:0000269" key="8">
    <source>
    </source>
</evidence>
<evidence type="ECO:0000269" key="9">
    <source>
    </source>
</evidence>
<evidence type="ECO:0000269" key="10">
    <source>
    </source>
</evidence>
<evidence type="ECO:0000269" key="11">
    <source>
    </source>
</evidence>
<evidence type="ECO:0000269" key="12">
    <source>
    </source>
</evidence>
<evidence type="ECO:0000269" key="13">
    <source>
    </source>
</evidence>
<evidence type="ECO:0000269" key="14">
    <source>
    </source>
</evidence>
<evidence type="ECO:0000269" key="15">
    <source>
    </source>
</evidence>
<evidence type="ECO:0000269" key="16">
    <source>
    </source>
</evidence>
<evidence type="ECO:0000305" key="17"/>
<evidence type="ECO:0000305" key="18">
    <source>
    </source>
</evidence>
<evidence type="ECO:0000305" key="19">
    <source>
    </source>
</evidence>
<evidence type="ECO:0000305" key="20">
    <source>
    </source>
</evidence>
<evidence type="ECO:0007744" key="21">
    <source>
        <dbReference type="PDB" id="8TO0"/>
    </source>
</evidence>
<sequence>MRECISIHVGQAGVQIGNACWELYCLEHGIQPDGQMPSDKTIGGGDDSFNTFFSETGAGKHVPRAVFVDLEPTVIDEVRTGTYRQLFHPEQLITGKEDAANNYARGHYTIGKEIIDLVLDRIRKLADQCTGLQGFLVFHSFGGGTGSGFTSLLMERLSVDYGKKSKLEFSIYPAPQVSTAVVEPYNSILTTHTTLEHSDCAFMVDNEAIYDICRRNLDIERPTYTNLNRLIGQIVSSITASLRFDGALNVDLTEFQTNLVPYPRIHFPLATYAPVISAEKAYHEQLSVAEITNACFEPANQMVKCDPRHGKYMACCLLYRGDVVPKDVNAAIATIKTKRTIQFVDWCPTGFKVGINYQPPTVVPGGDLAKVQRAVCMLSNTTAIAEAWARLDHKFDLMYAKRAFVHWYVGEGMEEGEFSEAREDMAALEKDYEEVGVDSVEGEGEEEGEEY</sequence>
<accession>P68369</accession>
<accession>P02551</accession>
<accession>P05210</accession>
<accession>P05212</accession>
<accession>Q3TGF0</accession>
<accession>Q3TIW2</accession>
<accession>Q3TPJ1</accession>
<accession>Q3ULN1</accession>
<accession>Q5XJF8</accession>
<reference key="1">
    <citation type="journal article" date="1986" name="Mol. Cell. Biol.">
        <title>Six mouse alpha-tubulin mRNAs encode five distinct isotypes: testis-specific expression of two sister genes.</title>
        <authorList>
            <person name="Villasante A."/>
            <person name="Wang D."/>
            <person name="Dobner P."/>
            <person name="Dolph P."/>
            <person name="Lewis S.A."/>
            <person name="Cowan N.J."/>
        </authorList>
    </citation>
    <scope>NUCLEOTIDE SEQUENCE [MRNA]</scope>
    <scope>TISSUE SPECIFICITY</scope>
</reference>
<reference key="2">
    <citation type="journal article" date="2005" name="Science">
        <title>The transcriptional landscape of the mammalian genome.</title>
        <authorList>
            <person name="Carninci P."/>
            <person name="Kasukawa T."/>
            <person name="Katayama S."/>
            <person name="Gough J."/>
            <person name="Frith M.C."/>
            <person name="Maeda N."/>
            <person name="Oyama R."/>
            <person name="Ravasi T."/>
            <person name="Lenhard B."/>
            <person name="Wells C."/>
            <person name="Kodzius R."/>
            <person name="Shimokawa K."/>
            <person name="Bajic V.B."/>
            <person name="Brenner S.E."/>
            <person name="Batalov S."/>
            <person name="Forrest A.R."/>
            <person name="Zavolan M."/>
            <person name="Davis M.J."/>
            <person name="Wilming L.G."/>
            <person name="Aidinis V."/>
            <person name="Allen J.E."/>
            <person name="Ambesi-Impiombato A."/>
            <person name="Apweiler R."/>
            <person name="Aturaliya R.N."/>
            <person name="Bailey T.L."/>
            <person name="Bansal M."/>
            <person name="Baxter L."/>
            <person name="Beisel K.W."/>
            <person name="Bersano T."/>
            <person name="Bono H."/>
            <person name="Chalk A.M."/>
            <person name="Chiu K.P."/>
            <person name="Choudhary V."/>
            <person name="Christoffels A."/>
            <person name="Clutterbuck D.R."/>
            <person name="Crowe M.L."/>
            <person name="Dalla E."/>
            <person name="Dalrymple B.P."/>
            <person name="de Bono B."/>
            <person name="Della Gatta G."/>
            <person name="di Bernardo D."/>
            <person name="Down T."/>
            <person name="Engstrom P."/>
            <person name="Fagiolini M."/>
            <person name="Faulkner G."/>
            <person name="Fletcher C.F."/>
            <person name="Fukushima T."/>
            <person name="Furuno M."/>
            <person name="Futaki S."/>
            <person name="Gariboldi M."/>
            <person name="Georgii-Hemming P."/>
            <person name="Gingeras T.R."/>
            <person name="Gojobori T."/>
            <person name="Green R.E."/>
            <person name="Gustincich S."/>
            <person name="Harbers M."/>
            <person name="Hayashi Y."/>
            <person name="Hensch T.K."/>
            <person name="Hirokawa N."/>
            <person name="Hill D."/>
            <person name="Huminiecki L."/>
            <person name="Iacono M."/>
            <person name="Ikeo K."/>
            <person name="Iwama A."/>
            <person name="Ishikawa T."/>
            <person name="Jakt M."/>
            <person name="Kanapin A."/>
            <person name="Katoh M."/>
            <person name="Kawasawa Y."/>
            <person name="Kelso J."/>
            <person name="Kitamura H."/>
            <person name="Kitano H."/>
            <person name="Kollias G."/>
            <person name="Krishnan S.P."/>
            <person name="Kruger A."/>
            <person name="Kummerfeld S.K."/>
            <person name="Kurochkin I.V."/>
            <person name="Lareau L.F."/>
            <person name="Lazarevic D."/>
            <person name="Lipovich L."/>
            <person name="Liu J."/>
            <person name="Liuni S."/>
            <person name="McWilliam S."/>
            <person name="Madan Babu M."/>
            <person name="Madera M."/>
            <person name="Marchionni L."/>
            <person name="Matsuda H."/>
            <person name="Matsuzawa S."/>
            <person name="Miki H."/>
            <person name="Mignone F."/>
            <person name="Miyake S."/>
            <person name="Morris K."/>
            <person name="Mottagui-Tabar S."/>
            <person name="Mulder N."/>
            <person name="Nakano N."/>
            <person name="Nakauchi H."/>
            <person name="Ng P."/>
            <person name="Nilsson R."/>
            <person name="Nishiguchi S."/>
            <person name="Nishikawa S."/>
            <person name="Nori F."/>
            <person name="Ohara O."/>
            <person name="Okazaki Y."/>
            <person name="Orlando V."/>
            <person name="Pang K.C."/>
            <person name="Pavan W.J."/>
            <person name="Pavesi G."/>
            <person name="Pesole G."/>
            <person name="Petrovsky N."/>
            <person name="Piazza S."/>
            <person name="Reed J."/>
            <person name="Reid J.F."/>
            <person name="Ring B.Z."/>
            <person name="Ringwald M."/>
            <person name="Rost B."/>
            <person name="Ruan Y."/>
            <person name="Salzberg S.L."/>
            <person name="Sandelin A."/>
            <person name="Schneider C."/>
            <person name="Schoenbach C."/>
            <person name="Sekiguchi K."/>
            <person name="Semple C.A."/>
            <person name="Seno S."/>
            <person name="Sessa L."/>
            <person name="Sheng Y."/>
            <person name="Shibata Y."/>
            <person name="Shimada H."/>
            <person name="Shimada K."/>
            <person name="Silva D."/>
            <person name="Sinclair B."/>
            <person name="Sperling S."/>
            <person name="Stupka E."/>
            <person name="Sugiura K."/>
            <person name="Sultana R."/>
            <person name="Takenaka Y."/>
            <person name="Taki K."/>
            <person name="Tammoja K."/>
            <person name="Tan S.L."/>
            <person name="Tang S."/>
            <person name="Taylor M.S."/>
            <person name="Tegner J."/>
            <person name="Teichmann S.A."/>
            <person name="Ueda H.R."/>
            <person name="van Nimwegen E."/>
            <person name="Verardo R."/>
            <person name="Wei C.L."/>
            <person name="Yagi K."/>
            <person name="Yamanishi H."/>
            <person name="Zabarovsky E."/>
            <person name="Zhu S."/>
            <person name="Zimmer A."/>
            <person name="Hide W."/>
            <person name="Bult C."/>
            <person name="Grimmond S.M."/>
            <person name="Teasdale R.D."/>
            <person name="Liu E.T."/>
            <person name="Brusic V."/>
            <person name="Quackenbush J."/>
            <person name="Wahlestedt C."/>
            <person name="Mattick J.S."/>
            <person name="Hume D.A."/>
            <person name="Kai C."/>
            <person name="Sasaki D."/>
            <person name="Tomaru Y."/>
            <person name="Fukuda S."/>
            <person name="Kanamori-Katayama M."/>
            <person name="Suzuki M."/>
            <person name="Aoki J."/>
            <person name="Arakawa T."/>
            <person name="Iida J."/>
            <person name="Imamura K."/>
            <person name="Itoh M."/>
            <person name="Kato T."/>
            <person name="Kawaji H."/>
            <person name="Kawagashira N."/>
            <person name="Kawashima T."/>
            <person name="Kojima M."/>
            <person name="Kondo S."/>
            <person name="Konno H."/>
            <person name="Nakano K."/>
            <person name="Ninomiya N."/>
            <person name="Nishio T."/>
            <person name="Okada M."/>
            <person name="Plessy C."/>
            <person name="Shibata K."/>
            <person name="Shiraki T."/>
            <person name="Suzuki S."/>
            <person name="Tagami M."/>
            <person name="Waki K."/>
            <person name="Watahiki A."/>
            <person name="Okamura-Oho Y."/>
            <person name="Suzuki H."/>
            <person name="Kawai J."/>
            <person name="Hayashizaki Y."/>
        </authorList>
    </citation>
    <scope>NUCLEOTIDE SEQUENCE [LARGE SCALE MRNA]</scope>
    <source>
        <strain>C57BL/6J</strain>
        <tissue>Heart</tissue>
        <tissue>Kidney</tissue>
        <tissue>Placenta</tissue>
        <tissue>Spinal ganglion</tissue>
        <tissue>Thymus</tissue>
    </source>
</reference>
<reference key="3">
    <citation type="journal article" date="2004" name="Genome Res.">
        <title>The status, quality, and expansion of the NIH full-length cDNA project: the Mammalian Gene Collection (MGC).</title>
        <authorList>
            <consortium name="The MGC Project Team"/>
        </authorList>
    </citation>
    <scope>NUCLEOTIDE SEQUENCE [LARGE SCALE MRNA]</scope>
    <source>
        <strain>C57BL/6J</strain>
        <tissue>Brain</tissue>
        <tissue>Olfactory epithelium</tissue>
    </source>
</reference>
<reference key="4">
    <citation type="submission" date="2009-01" db="UniProtKB">
        <authorList>
            <person name="Lubec G."/>
            <person name="Klug S."/>
            <person name="Kang S.U."/>
            <person name="Sunyer B."/>
            <person name="Chen W.-Q."/>
        </authorList>
    </citation>
    <scope>PROTEIN SEQUENCE OF 41-60; 65-79; 85-121; 157-163; 216-280; 312-320; 327-336; 340-370; 374-401 AND 403-440</scope>
    <scope>IDENTIFICATION BY MASS SPECTROMETRY</scope>
    <source>
        <strain>C57BL/6J</strain>
        <strain>OF1</strain>
        <tissue>Brain</tissue>
        <tissue>Hippocampus</tissue>
    </source>
</reference>
<reference key="5">
    <citation type="journal article" date="1985" name="J. Cell Biol.">
        <title>Five mouse tubulin isotypes and their regulated expression during development.</title>
        <authorList>
            <person name="Lewis S.A."/>
            <person name="Lee M.G.-S."/>
            <person name="Cowan N.J."/>
        </authorList>
    </citation>
    <scope>NUCLEOTIDE SEQUENCE [MRNA] OF 254-451</scope>
</reference>
<reference key="6">
    <citation type="journal article" date="1990" name="Science">
        <title>Posttranslational glutamylation of alpha-tubulin.</title>
        <authorList>
            <person name="Edde B."/>
            <person name="Rossier J."/>
            <person name="Le Caer J.P."/>
            <person name="Desbruyeres E."/>
            <person name="Gros F."/>
            <person name="Denoulet P."/>
        </authorList>
    </citation>
    <scope>PROTEIN SEQUENCE OF 440-448</scope>
    <scope>GLUTAMYLATION AT GLU-445</scope>
</reference>
<reference key="7">
    <citation type="journal article" date="2005" name="Science">
        <title>Tubulin polyglutamylase enzymes are members of the TTL domain protein family.</title>
        <authorList>
            <person name="Janke C."/>
            <person name="Rogowski K."/>
            <person name="Wloga D."/>
            <person name="Regnard C."/>
            <person name="Kajava A.V."/>
            <person name="Strub J.-M."/>
            <person name="Temurak N."/>
            <person name="van Dijk J."/>
            <person name="Boucher D."/>
            <person name="van Dorsselaer A."/>
            <person name="Suryavanshi S."/>
            <person name="Gaertig J."/>
            <person name="Edde B."/>
        </authorList>
    </citation>
    <scope>GLUTAMYLATION</scope>
</reference>
<reference key="8">
    <citation type="journal article" date="2006" name="J. Cell Biol.">
        <title>Tubulin tyrosination is a major factor affecting the recruitment of CAP-Gly proteins at microtubule plus ends.</title>
        <authorList>
            <person name="Peris L."/>
            <person name="Thery M."/>
            <person name="Faure J."/>
            <person name="Saoudi Y."/>
            <person name="Lafanechere L."/>
            <person name="Chilton J.K."/>
            <person name="Gordon-Weeks P."/>
            <person name="Galjart N."/>
            <person name="Bornens M."/>
            <person name="Wordeman L."/>
            <person name="Wehland J."/>
            <person name="Andrieux A."/>
            <person name="Job D."/>
        </authorList>
    </citation>
    <scope>TYROSINATION</scope>
</reference>
<reference key="9">
    <citation type="journal article" date="2009" name="Cell">
        <title>Evolutionary divergence of enzymatic mechanisms for posttranslational polyglycylation.</title>
        <authorList>
            <person name="Rogowski K."/>
            <person name="Juge F."/>
            <person name="van Dijk J."/>
            <person name="Wloga D."/>
            <person name="Strub J.-M."/>
            <person name="Levilliers N."/>
            <person name="Thomas D."/>
            <person name="Bre M.-H."/>
            <person name="Van Dorsselaer A."/>
            <person name="Gaertig J."/>
            <person name="Janke C."/>
        </authorList>
    </citation>
    <scope>GLYCYLATION</scope>
</reference>
<reference key="10">
    <citation type="journal article" date="2009" name="J. Cell Biol.">
        <title>Motor-dependent microtubule disassembly driven by tubulin tyrosination.</title>
        <authorList>
            <person name="Peris L."/>
            <person name="Wagenbach M."/>
            <person name="Lafanechere L."/>
            <person name="Brocard J."/>
            <person name="Moore A.T."/>
            <person name="Kozielski F."/>
            <person name="Job D."/>
            <person name="Wordeman L."/>
            <person name="Andrieux A."/>
        </authorList>
    </citation>
    <scope>TYROSINATION</scope>
</reference>
<reference key="11">
    <citation type="journal article" date="2013" name="J. Cell Biol.">
        <title>Tubulin glycylases and glutamylases have distinct functions in stabilization and motility of ependymal cilia.</title>
        <authorList>
            <person name="Bosch Grau M."/>
            <person name="Gonzalez Curto G."/>
            <person name="Rocha C."/>
            <person name="Magiera M.M."/>
            <person name="Marques Sousa P."/>
            <person name="Giordano T."/>
            <person name="Spassky N."/>
            <person name="Janke C."/>
        </authorList>
    </citation>
    <scope>GLYCYLATION</scope>
    <scope>GLUTAMYLATION</scope>
</reference>
<reference key="12">
    <citation type="journal article" date="2015" name="Nat. Commun.">
        <title>Detyrosinated microtubules modulate mechanotransduction in heart and skeletal muscle.</title>
        <authorList>
            <person name="Kerr J.P."/>
            <person name="Robison P."/>
            <person name="Shi G."/>
            <person name="Bogush A.I."/>
            <person name="Kempema A.M."/>
            <person name="Hexum J.K."/>
            <person name="Becerra N."/>
            <person name="Harki D.A."/>
            <person name="Martin S.S."/>
            <person name="Raiteri R."/>
            <person name="Prosser B.L."/>
            <person name="Ward C.W."/>
        </authorList>
    </citation>
    <scope>DETYROSINATION</scope>
</reference>
<reference key="13">
    <citation type="journal article" date="2016" name="Science">
        <title>Detyrosinated microtubules buckle and bear load in contracting cardiomyocytes.</title>
        <authorList>
            <person name="Robison P."/>
            <person name="Caporizzo M.A."/>
            <person name="Ahmadzadeh H."/>
            <person name="Bogush A.I."/>
            <person name="Chen C.Y."/>
            <person name="Margulies K.B."/>
            <person name="Shenoy V.B."/>
            <person name="Prosser B.L."/>
        </authorList>
    </citation>
    <scope>DETYROSINATION</scope>
</reference>
<reference key="14">
    <citation type="journal article" date="2017" name="Science">
        <title>Vasohibins/SVBP are tubulin carboxypeptidases (TCPs) that regulate neuron differentiation.</title>
        <authorList>
            <person name="Aillaud C."/>
            <person name="Bosc C."/>
            <person name="Peris L."/>
            <person name="Bosson A."/>
            <person name="Heemeryck P."/>
            <person name="Van Dijk J."/>
            <person name="Le Friec J."/>
            <person name="Boulan B."/>
            <person name="Vossier F."/>
            <person name="Sanman L.E."/>
            <person name="Syed S."/>
            <person name="Amara N."/>
            <person name="Coute Y."/>
            <person name="Lafanechere L."/>
            <person name="Denarier E."/>
            <person name="Delphin C."/>
            <person name="Pelletier L."/>
            <person name="Humbert S."/>
            <person name="Bogyo M."/>
            <person name="Andrieux A."/>
            <person name="Rogowski K."/>
            <person name="Moutin M.J."/>
        </authorList>
    </citation>
    <scope>DETYROSINATION</scope>
</reference>
<reference key="15">
    <citation type="journal article" date="2021" name="Science">
        <title>Tubulin glycylation controls axonemal dynein activity, flagellar beat, and male fertility.</title>
        <authorList>
            <person name="Gadadhar S."/>
            <person name="Alvarez Viar G."/>
            <person name="Hansen J.N."/>
            <person name="Gong A."/>
            <person name="Kostarev A."/>
            <person name="Ialy-Radio C."/>
            <person name="Leboucher S."/>
            <person name="Whitfield M."/>
            <person name="Ziyyat A."/>
            <person name="Toure A."/>
            <person name="Alvarez L."/>
            <person name="Pigino G."/>
            <person name="Janke C."/>
        </authorList>
    </citation>
    <scope>GLYCYLATION</scope>
</reference>
<reference evidence="21" key="16">
    <citation type="journal article" date="2023" name="Cell">
        <title>De novo protein identification in mammalian sperm using in situ cryoelectron tomography and AlphaFold2 docking.</title>
        <authorList>
            <person name="Chen Z."/>
            <person name="Shiozaki M."/>
            <person name="Haas K.M."/>
            <person name="Skinner W.M."/>
            <person name="Zhao S."/>
            <person name="Guo C."/>
            <person name="Polacco B.J."/>
            <person name="Yu Z."/>
            <person name="Krogan N.J."/>
            <person name="Lishko P.V."/>
            <person name="Kaake R.M."/>
            <person name="Vale R.D."/>
            <person name="Agard D.A."/>
        </authorList>
    </citation>
    <scope>STRUCTURE BY ELECTRON MICROSCOPY (7.70 ANGSTROMS) OF SPERM FLAGELLAR DOUBLET MICROTUBULES</scope>
    <scope>FUNCTION</scope>
    <scope>SUBCELLULAR LOCATION</scope>
    <scope>SUBUNIT</scope>
</reference>
<organism>
    <name type="scientific">Mus musculus</name>
    <name type="common">Mouse</name>
    <dbReference type="NCBI Taxonomy" id="10090"/>
    <lineage>
        <taxon>Eukaryota</taxon>
        <taxon>Metazoa</taxon>
        <taxon>Chordata</taxon>
        <taxon>Craniata</taxon>
        <taxon>Vertebrata</taxon>
        <taxon>Euteleostomi</taxon>
        <taxon>Mammalia</taxon>
        <taxon>Eutheria</taxon>
        <taxon>Euarchontoglires</taxon>
        <taxon>Glires</taxon>
        <taxon>Rodentia</taxon>
        <taxon>Myomorpha</taxon>
        <taxon>Muroidea</taxon>
        <taxon>Muridae</taxon>
        <taxon>Murinae</taxon>
        <taxon>Mus</taxon>
        <taxon>Mus</taxon>
    </lineage>
</organism>
<name>TBA1A_MOUSE</name>
<feature type="chain" id="PRO_0000048120" description="Tubulin alpha-1A chain">
    <location>
        <begin position="1"/>
        <end position="451"/>
    </location>
</feature>
<feature type="chain" id="PRO_0000437379" description="Detyrosinated tubulin alpha-1A chain" evidence="18 19 20">
    <location>
        <begin position="1"/>
        <end position="450"/>
    </location>
</feature>
<feature type="region of interest" description="Disordered" evidence="4">
    <location>
        <begin position="432"/>
        <end position="451"/>
    </location>
</feature>
<feature type="active site" evidence="1">
    <location>
        <position position="254"/>
    </location>
</feature>
<feature type="binding site" evidence="1">
    <location>
        <position position="10"/>
    </location>
    <ligand>
        <name>GTP</name>
        <dbReference type="ChEBI" id="CHEBI:37565"/>
    </ligand>
</feature>
<feature type="binding site" evidence="1">
    <location>
        <position position="11"/>
    </location>
    <ligand>
        <name>GTP</name>
        <dbReference type="ChEBI" id="CHEBI:37565"/>
    </ligand>
</feature>
<feature type="binding site" evidence="1">
    <location>
        <position position="12"/>
    </location>
    <ligand>
        <name>GTP</name>
        <dbReference type="ChEBI" id="CHEBI:37565"/>
    </ligand>
</feature>
<feature type="binding site" evidence="1">
    <location>
        <position position="15"/>
    </location>
    <ligand>
        <name>GTP</name>
        <dbReference type="ChEBI" id="CHEBI:37565"/>
    </ligand>
</feature>
<feature type="binding site" evidence="1">
    <location>
        <position position="71"/>
    </location>
    <ligand>
        <name>GTP</name>
        <dbReference type="ChEBI" id="CHEBI:37565"/>
    </ligand>
</feature>
<feature type="binding site" evidence="1">
    <location>
        <position position="71"/>
    </location>
    <ligand>
        <name>Mg(2+)</name>
        <dbReference type="ChEBI" id="CHEBI:18420"/>
    </ligand>
</feature>
<feature type="binding site" evidence="1">
    <location>
        <position position="99"/>
    </location>
    <ligand>
        <name>GTP</name>
        <dbReference type="ChEBI" id="CHEBI:37565"/>
    </ligand>
</feature>
<feature type="binding site" evidence="1">
    <location>
        <position position="140"/>
    </location>
    <ligand>
        <name>GTP</name>
        <dbReference type="ChEBI" id="CHEBI:37565"/>
    </ligand>
</feature>
<feature type="binding site" evidence="1">
    <location>
        <position position="143"/>
    </location>
    <ligand>
        <name>GTP</name>
        <dbReference type="ChEBI" id="CHEBI:37565"/>
    </ligand>
</feature>
<feature type="binding site" evidence="1">
    <location>
        <position position="144"/>
    </location>
    <ligand>
        <name>GTP</name>
        <dbReference type="ChEBI" id="CHEBI:37565"/>
    </ligand>
</feature>
<feature type="binding site" evidence="1">
    <location>
        <position position="145"/>
    </location>
    <ligand>
        <name>GTP</name>
        <dbReference type="ChEBI" id="CHEBI:37565"/>
    </ligand>
</feature>
<feature type="binding site" evidence="1">
    <location>
        <position position="146"/>
    </location>
    <ligand>
        <name>GTP</name>
        <dbReference type="ChEBI" id="CHEBI:37565"/>
    </ligand>
</feature>
<feature type="binding site" evidence="1">
    <location>
        <position position="179"/>
    </location>
    <ligand>
        <name>GTP</name>
        <dbReference type="ChEBI" id="CHEBI:37565"/>
    </ligand>
</feature>
<feature type="binding site" evidence="1">
    <location>
        <position position="183"/>
    </location>
    <ligand>
        <name>GTP</name>
        <dbReference type="ChEBI" id="CHEBI:37565"/>
    </ligand>
</feature>
<feature type="binding site" evidence="1">
    <location>
        <position position="206"/>
    </location>
    <ligand>
        <name>GTP</name>
        <dbReference type="ChEBI" id="CHEBI:37565"/>
    </ligand>
</feature>
<feature type="binding site" evidence="1">
    <location>
        <position position="224"/>
    </location>
    <ligand>
        <name>GTP</name>
        <dbReference type="ChEBI" id="CHEBI:37565"/>
    </ligand>
</feature>
<feature type="binding site" evidence="1">
    <location>
        <position position="228"/>
    </location>
    <ligand>
        <name>GTP</name>
        <dbReference type="ChEBI" id="CHEBI:37565"/>
    </ligand>
</feature>
<feature type="binding site" evidence="1">
    <location>
        <position position="252"/>
    </location>
    <ligand>
        <name>GTP</name>
        <dbReference type="ChEBI" id="CHEBI:37565"/>
    </ligand>
</feature>
<feature type="site" description="Involved in polymerization">
    <location>
        <position position="451"/>
    </location>
</feature>
<feature type="modified residue" description="N6-acetyllysine" evidence="3">
    <location>
        <position position="40"/>
    </location>
</feature>
<feature type="modified residue" description="3'-nitrotyrosine" evidence="2">
    <location>
        <position position="282"/>
    </location>
</feature>
<feature type="modified residue" description="Phosphoserine" evidence="2">
    <location>
        <position position="439"/>
    </location>
</feature>
<feature type="modified residue" description="5-glutamyl polyglutamate" evidence="3">
    <location>
        <position position="443"/>
    </location>
</feature>
<feature type="modified residue" description="5-glutamyl polyglutamate" evidence="9">
    <location>
        <position position="445"/>
    </location>
</feature>
<feature type="modified residue" description="3'-nitrotyrosine" evidence="3">
    <location>
        <position position="451"/>
    </location>
</feature>
<feature type="sequence conflict" description="In Ref. 2; BAE40598." evidence="17" ref="2">
    <original>K</original>
    <variation>E</variation>
    <location>
        <position position="124"/>
    </location>
</feature>
<feature type="sequence conflict" description="In Ref. 2; BAE26417." evidence="17" ref="2">
    <original>L</original>
    <variation>P</variation>
    <location>
        <position position="132"/>
    </location>
</feature>
<feature type="sequence conflict" description="In Ref. 2; BAE37745." evidence="17" ref="2">
    <original>T</original>
    <variation>I</variation>
    <location>
        <position position="257"/>
    </location>
</feature>
<feature type="sequence conflict" description="In Ref. 3; AAH83344." evidence="17" ref="3">
    <original>A</original>
    <variation>S</variation>
    <location>
        <position position="273"/>
    </location>
</feature>
<feature type="sequence conflict" description="In Ref. 2; BAE26417." evidence="17" ref="2">
    <original>V</original>
    <variation>G</variation>
    <location>
        <position position="328"/>
    </location>
</feature>
<keyword id="KW-0002">3D-structure</keyword>
<keyword id="KW-0007">Acetylation</keyword>
<keyword id="KW-0966">Cell projection</keyword>
<keyword id="KW-0969">Cilium</keyword>
<keyword id="KW-0963">Cytoplasm</keyword>
<keyword id="KW-0206">Cytoskeleton</keyword>
<keyword id="KW-0903">Direct protein sequencing</keyword>
<keyword id="KW-0282">Flagellum</keyword>
<keyword id="KW-0342">GTP-binding</keyword>
<keyword id="KW-0378">Hydrolase</keyword>
<keyword id="KW-1017">Isopeptide bond</keyword>
<keyword id="KW-0460">Magnesium</keyword>
<keyword id="KW-0479">Metal-binding</keyword>
<keyword id="KW-0488">Methylation</keyword>
<keyword id="KW-0493">Microtubule</keyword>
<keyword id="KW-0944">Nitration</keyword>
<keyword id="KW-0547">Nucleotide-binding</keyword>
<keyword id="KW-0597">Phosphoprotein</keyword>
<keyword id="KW-1185">Reference proteome</keyword>